<sequence length="428" mass="45823">MNTKRSEEIFGAAKNLMPGGVSSPVRAFKSVEGDPIVFDRVKGPYAWDVDGNRYIDYVGSWGPAICGHAHPEVIAALQETLEKGTSFGAPCVLENQLAEMVIDAVPSVEMVRFVNSGTEACMAVLRLMRAFTGRDKVIKFEGCYHGHADMFLVKAGSGVATLGLPDSPGVPRSTTANTLTAPYNDLEAVKELFAENPDAISGVILEPVVGNAGFITPEPGFLEGLREVTQENGALLVFDEVMTGFRISYGGAQERFGVTPDLTTMGKVIGGGLPVGAYGGRKEIMSMVSPSGPMYQAGTLSGNPLAMTAGIKTLELLKQEGTYEKLEALTKKLLDGILTAAKESNIPIYGQSISAMFGFYLCEGPVRNFEEAKSSDTELFSKIHRLMLQKGVYLAPSAFEAGFTSLAHSEDDINATIKAFQEIFSEIS</sequence>
<protein>
    <recommendedName>
        <fullName evidence="1">Glutamate-1-semialdehyde 2,1-aminomutase</fullName>
        <shortName evidence="1">GSA</shortName>
        <ecNumber evidence="1">5.4.3.8</ecNumber>
    </recommendedName>
    <alternativeName>
        <fullName evidence="1">Glutamate-1-semialdehyde aminotransferase</fullName>
        <shortName evidence="1">GSA-AT</shortName>
    </alternativeName>
</protein>
<name>GSA_PROM1</name>
<evidence type="ECO:0000255" key="1">
    <source>
        <dbReference type="HAMAP-Rule" id="MF_00375"/>
    </source>
</evidence>
<accession>A2C0U2</accession>
<keyword id="KW-0149">Chlorophyll biosynthesis</keyword>
<keyword id="KW-0963">Cytoplasm</keyword>
<keyword id="KW-0413">Isomerase</keyword>
<keyword id="KW-0627">Porphyrin biosynthesis</keyword>
<keyword id="KW-0663">Pyridoxal phosphate</keyword>
<organism>
    <name type="scientific">Prochlorococcus marinus (strain NATL1A)</name>
    <dbReference type="NCBI Taxonomy" id="167555"/>
    <lineage>
        <taxon>Bacteria</taxon>
        <taxon>Bacillati</taxon>
        <taxon>Cyanobacteriota</taxon>
        <taxon>Cyanophyceae</taxon>
        <taxon>Synechococcales</taxon>
        <taxon>Prochlorococcaceae</taxon>
        <taxon>Prochlorococcus</taxon>
    </lineage>
</organism>
<reference key="1">
    <citation type="journal article" date="2007" name="PLoS Genet.">
        <title>Patterns and implications of gene gain and loss in the evolution of Prochlorococcus.</title>
        <authorList>
            <person name="Kettler G.C."/>
            <person name="Martiny A.C."/>
            <person name="Huang K."/>
            <person name="Zucker J."/>
            <person name="Coleman M.L."/>
            <person name="Rodrigue S."/>
            <person name="Chen F."/>
            <person name="Lapidus A."/>
            <person name="Ferriera S."/>
            <person name="Johnson J."/>
            <person name="Steglich C."/>
            <person name="Church G.M."/>
            <person name="Richardson P."/>
            <person name="Chisholm S.W."/>
        </authorList>
    </citation>
    <scope>NUCLEOTIDE SEQUENCE [LARGE SCALE GENOMIC DNA]</scope>
    <source>
        <strain>NATL1A</strain>
    </source>
</reference>
<gene>
    <name evidence="1" type="primary">hemL</name>
    <name type="ordered locus">NATL1_05401</name>
</gene>
<dbReference type="EC" id="5.4.3.8" evidence="1"/>
<dbReference type="EMBL" id="CP000553">
    <property type="protein sequence ID" value="ABM75102.1"/>
    <property type="molecule type" value="Genomic_DNA"/>
</dbReference>
<dbReference type="RefSeq" id="WP_011823279.1">
    <property type="nucleotide sequence ID" value="NC_008819.1"/>
</dbReference>
<dbReference type="SMR" id="A2C0U2"/>
<dbReference type="KEGG" id="pme:NATL1_05401"/>
<dbReference type="eggNOG" id="COG0001">
    <property type="taxonomic scope" value="Bacteria"/>
</dbReference>
<dbReference type="HOGENOM" id="CLU_016922_1_5_3"/>
<dbReference type="UniPathway" id="UPA00251">
    <property type="reaction ID" value="UER00317"/>
</dbReference>
<dbReference type="UniPathway" id="UPA00668"/>
<dbReference type="Proteomes" id="UP000002592">
    <property type="component" value="Chromosome"/>
</dbReference>
<dbReference type="GO" id="GO:0005737">
    <property type="term" value="C:cytoplasm"/>
    <property type="evidence" value="ECO:0007669"/>
    <property type="project" value="UniProtKB-SubCell"/>
</dbReference>
<dbReference type="GO" id="GO:0042286">
    <property type="term" value="F:glutamate-1-semialdehyde 2,1-aminomutase activity"/>
    <property type="evidence" value="ECO:0007669"/>
    <property type="project" value="UniProtKB-UniRule"/>
</dbReference>
<dbReference type="GO" id="GO:0030170">
    <property type="term" value="F:pyridoxal phosphate binding"/>
    <property type="evidence" value="ECO:0007669"/>
    <property type="project" value="InterPro"/>
</dbReference>
<dbReference type="GO" id="GO:0008483">
    <property type="term" value="F:transaminase activity"/>
    <property type="evidence" value="ECO:0007669"/>
    <property type="project" value="InterPro"/>
</dbReference>
<dbReference type="GO" id="GO:0015995">
    <property type="term" value="P:chlorophyll biosynthetic process"/>
    <property type="evidence" value="ECO:0007669"/>
    <property type="project" value="UniProtKB-UniRule"/>
</dbReference>
<dbReference type="GO" id="GO:0006782">
    <property type="term" value="P:protoporphyrinogen IX biosynthetic process"/>
    <property type="evidence" value="ECO:0007669"/>
    <property type="project" value="UniProtKB-UniRule"/>
</dbReference>
<dbReference type="CDD" id="cd00610">
    <property type="entry name" value="OAT_like"/>
    <property type="match status" value="1"/>
</dbReference>
<dbReference type="FunFam" id="3.40.640.10:FF:000021">
    <property type="entry name" value="Glutamate-1-semialdehyde 2,1-aminomutase"/>
    <property type="match status" value="1"/>
</dbReference>
<dbReference type="Gene3D" id="3.90.1150.10">
    <property type="entry name" value="Aspartate Aminotransferase, domain 1"/>
    <property type="match status" value="1"/>
</dbReference>
<dbReference type="Gene3D" id="3.40.640.10">
    <property type="entry name" value="Type I PLP-dependent aspartate aminotransferase-like (Major domain)"/>
    <property type="match status" value="1"/>
</dbReference>
<dbReference type="HAMAP" id="MF_00375">
    <property type="entry name" value="HemL_aminotrans_3"/>
    <property type="match status" value="1"/>
</dbReference>
<dbReference type="InterPro" id="IPR004639">
    <property type="entry name" value="4pyrrol_synth_GluAld_NH2Trfase"/>
</dbReference>
<dbReference type="InterPro" id="IPR005814">
    <property type="entry name" value="Aminotrans_3"/>
</dbReference>
<dbReference type="InterPro" id="IPR049704">
    <property type="entry name" value="Aminotrans_3_PPA_site"/>
</dbReference>
<dbReference type="InterPro" id="IPR015424">
    <property type="entry name" value="PyrdxlP-dep_Trfase"/>
</dbReference>
<dbReference type="InterPro" id="IPR015421">
    <property type="entry name" value="PyrdxlP-dep_Trfase_major"/>
</dbReference>
<dbReference type="InterPro" id="IPR015422">
    <property type="entry name" value="PyrdxlP-dep_Trfase_small"/>
</dbReference>
<dbReference type="NCBIfam" id="TIGR00713">
    <property type="entry name" value="hemL"/>
    <property type="match status" value="1"/>
</dbReference>
<dbReference type="NCBIfam" id="NF000818">
    <property type="entry name" value="PRK00062.1"/>
    <property type="match status" value="1"/>
</dbReference>
<dbReference type="PANTHER" id="PTHR43713">
    <property type="entry name" value="GLUTAMATE-1-SEMIALDEHYDE 2,1-AMINOMUTASE"/>
    <property type="match status" value="1"/>
</dbReference>
<dbReference type="PANTHER" id="PTHR43713:SF3">
    <property type="entry name" value="GLUTAMATE-1-SEMIALDEHYDE 2,1-AMINOMUTASE 1, CHLOROPLASTIC-RELATED"/>
    <property type="match status" value="1"/>
</dbReference>
<dbReference type="Pfam" id="PF00202">
    <property type="entry name" value="Aminotran_3"/>
    <property type="match status" value="1"/>
</dbReference>
<dbReference type="SUPFAM" id="SSF53383">
    <property type="entry name" value="PLP-dependent transferases"/>
    <property type="match status" value="1"/>
</dbReference>
<dbReference type="PROSITE" id="PS00600">
    <property type="entry name" value="AA_TRANSFER_CLASS_3"/>
    <property type="match status" value="1"/>
</dbReference>
<feature type="chain" id="PRO_1000201029" description="Glutamate-1-semialdehyde 2,1-aminomutase">
    <location>
        <begin position="1"/>
        <end position="428"/>
    </location>
</feature>
<feature type="modified residue" description="N6-(pyridoxal phosphate)lysine" evidence="1">
    <location>
        <position position="267"/>
    </location>
</feature>
<proteinExistence type="inferred from homology"/>
<comment type="catalytic activity">
    <reaction evidence="1">
        <text>(S)-4-amino-5-oxopentanoate = 5-aminolevulinate</text>
        <dbReference type="Rhea" id="RHEA:14265"/>
        <dbReference type="ChEBI" id="CHEBI:57501"/>
        <dbReference type="ChEBI" id="CHEBI:356416"/>
        <dbReference type="EC" id="5.4.3.8"/>
    </reaction>
</comment>
<comment type="cofactor">
    <cofactor evidence="1">
        <name>pyridoxal 5'-phosphate</name>
        <dbReference type="ChEBI" id="CHEBI:597326"/>
    </cofactor>
</comment>
<comment type="pathway">
    <text evidence="1">Porphyrin-containing compound metabolism; protoporphyrin-IX biosynthesis; 5-aminolevulinate from L-glutamyl-tRNA(Glu): step 2/2.</text>
</comment>
<comment type="pathway">
    <text evidence="1">Porphyrin-containing compound metabolism; chlorophyll biosynthesis.</text>
</comment>
<comment type="subunit">
    <text evidence="1">Homodimer.</text>
</comment>
<comment type="subcellular location">
    <subcellularLocation>
        <location evidence="1">Cytoplasm</location>
    </subcellularLocation>
</comment>
<comment type="similarity">
    <text evidence="1">Belongs to the class-III pyridoxal-phosphate-dependent aminotransferase family. HemL subfamily.</text>
</comment>